<name>GSTUO_ARATH</name>
<organism>
    <name type="scientific">Arabidopsis thaliana</name>
    <name type="common">Mouse-ear cress</name>
    <dbReference type="NCBI Taxonomy" id="3702"/>
    <lineage>
        <taxon>Eukaryota</taxon>
        <taxon>Viridiplantae</taxon>
        <taxon>Streptophyta</taxon>
        <taxon>Embryophyta</taxon>
        <taxon>Tracheophyta</taxon>
        <taxon>Spermatophyta</taxon>
        <taxon>Magnoliopsida</taxon>
        <taxon>eudicotyledons</taxon>
        <taxon>Gunneridae</taxon>
        <taxon>Pentapetalae</taxon>
        <taxon>rosids</taxon>
        <taxon>malvids</taxon>
        <taxon>Brassicales</taxon>
        <taxon>Brassicaceae</taxon>
        <taxon>Camelineae</taxon>
        <taxon>Arabidopsis</taxon>
    </lineage>
</organism>
<proteinExistence type="evidence at transcript level"/>
<comment type="function">
    <text evidence="1">May be involved in the conjugation of reduced glutathione to a wide number of exogenous and endogenous hydrophobic electrophiles and have a detoxification role against certain herbicides.</text>
</comment>
<comment type="catalytic activity">
    <reaction>
        <text>RX + glutathione = an S-substituted glutathione + a halide anion + H(+)</text>
        <dbReference type="Rhea" id="RHEA:16437"/>
        <dbReference type="ChEBI" id="CHEBI:15378"/>
        <dbReference type="ChEBI" id="CHEBI:16042"/>
        <dbReference type="ChEBI" id="CHEBI:17792"/>
        <dbReference type="ChEBI" id="CHEBI:57925"/>
        <dbReference type="ChEBI" id="CHEBI:90779"/>
        <dbReference type="EC" id="2.5.1.18"/>
    </reaction>
</comment>
<comment type="subcellular location">
    <subcellularLocation>
        <location evidence="5">Cytoplasm</location>
        <location evidence="5">Cytosol</location>
    </subcellularLocation>
</comment>
<comment type="induction">
    <text evidence="3 4">By acetochlor, metolachlor, 2,4,6-trinitrotoluene (TNT) and 2,6-dinitrotoluene (2,6-DNT).</text>
</comment>
<comment type="similarity">
    <text evidence="5">Belongs to the GST superfamily. Tau family.</text>
</comment>
<gene>
    <name type="primary">GSTU24</name>
    <name type="ordered locus">At1g17170</name>
    <name type="ORF">F20D23.13</name>
</gene>
<protein>
    <recommendedName>
        <fullName>Glutathione S-transferase U24</fullName>
        <shortName>AtGSTU24</shortName>
        <ecNumber>2.5.1.18</ecNumber>
    </recommendedName>
    <alternativeName>
        <fullName>GST class-tau member 24</fullName>
    </alternativeName>
</protein>
<feature type="chain" id="PRO_0000413569" description="Glutathione S-transferase U24">
    <location>
        <begin position="1"/>
        <end position="218"/>
    </location>
</feature>
<feature type="domain" description="GST N-terminal">
    <location>
        <begin position="3"/>
        <end position="82"/>
    </location>
</feature>
<feature type="domain" description="GST C-terminal">
    <location>
        <begin position="88"/>
        <end position="215"/>
    </location>
</feature>
<feature type="binding site" evidence="1">
    <location>
        <begin position="13"/>
        <end position="14"/>
    </location>
    <ligand>
        <name>glutathione</name>
        <dbReference type="ChEBI" id="CHEBI:57925"/>
    </ligand>
</feature>
<feature type="binding site" evidence="1">
    <location>
        <begin position="39"/>
        <end position="40"/>
    </location>
    <ligand>
        <name>glutathione</name>
        <dbReference type="ChEBI" id="CHEBI:57925"/>
    </ligand>
</feature>
<feature type="binding site" evidence="1">
    <location>
        <begin position="53"/>
        <end position="54"/>
    </location>
    <ligand>
        <name>glutathione</name>
        <dbReference type="ChEBI" id="CHEBI:57925"/>
    </ligand>
</feature>
<feature type="binding site" evidence="1">
    <location>
        <begin position="66"/>
        <end position="67"/>
    </location>
    <ligand>
        <name>glutathione</name>
        <dbReference type="ChEBI" id="CHEBI:57925"/>
    </ligand>
</feature>
<feature type="modified residue" description="Phosphothreonine" evidence="2">
    <location>
        <position position="148"/>
    </location>
</feature>
<accession>Q9SHH6</accession>
<reference key="1">
    <citation type="journal article" date="2000" name="Nature">
        <title>Sequence and analysis of chromosome 1 of the plant Arabidopsis thaliana.</title>
        <authorList>
            <person name="Theologis A."/>
            <person name="Ecker J.R."/>
            <person name="Palm C.J."/>
            <person name="Federspiel N.A."/>
            <person name="Kaul S."/>
            <person name="White O."/>
            <person name="Alonso J."/>
            <person name="Altafi H."/>
            <person name="Araujo R."/>
            <person name="Bowman C.L."/>
            <person name="Brooks S.Y."/>
            <person name="Buehler E."/>
            <person name="Chan A."/>
            <person name="Chao Q."/>
            <person name="Chen H."/>
            <person name="Cheuk R.F."/>
            <person name="Chin C.W."/>
            <person name="Chung M.K."/>
            <person name="Conn L."/>
            <person name="Conway A.B."/>
            <person name="Conway A.R."/>
            <person name="Creasy T.H."/>
            <person name="Dewar K."/>
            <person name="Dunn P."/>
            <person name="Etgu P."/>
            <person name="Feldblyum T.V."/>
            <person name="Feng J.-D."/>
            <person name="Fong B."/>
            <person name="Fujii C.Y."/>
            <person name="Gill J.E."/>
            <person name="Goldsmith A.D."/>
            <person name="Haas B."/>
            <person name="Hansen N.F."/>
            <person name="Hughes B."/>
            <person name="Huizar L."/>
            <person name="Hunter J.L."/>
            <person name="Jenkins J."/>
            <person name="Johnson-Hopson C."/>
            <person name="Khan S."/>
            <person name="Khaykin E."/>
            <person name="Kim C.J."/>
            <person name="Koo H.L."/>
            <person name="Kremenetskaia I."/>
            <person name="Kurtz D.B."/>
            <person name="Kwan A."/>
            <person name="Lam B."/>
            <person name="Langin-Hooper S."/>
            <person name="Lee A."/>
            <person name="Lee J.M."/>
            <person name="Lenz C.A."/>
            <person name="Li J.H."/>
            <person name="Li Y.-P."/>
            <person name="Lin X."/>
            <person name="Liu S.X."/>
            <person name="Liu Z.A."/>
            <person name="Luros J.S."/>
            <person name="Maiti R."/>
            <person name="Marziali A."/>
            <person name="Militscher J."/>
            <person name="Miranda M."/>
            <person name="Nguyen M."/>
            <person name="Nierman W.C."/>
            <person name="Osborne B.I."/>
            <person name="Pai G."/>
            <person name="Peterson J."/>
            <person name="Pham P.K."/>
            <person name="Rizzo M."/>
            <person name="Rooney T."/>
            <person name="Rowley D."/>
            <person name="Sakano H."/>
            <person name="Salzberg S.L."/>
            <person name="Schwartz J.R."/>
            <person name="Shinn P."/>
            <person name="Southwick A.M."/>
            <person name="Sun H."/>
            <person name="Tallon L.J."/>
            <person name="Tambunga G."/>
            <person name="Toriumi M.J."/>
            <person name="Town C.D."/>
            <person name="Utterback T."/>
            <person name="Van Aken S."/>
            <person name="Vaysberg M."/>
            <person name="Vysotskaia V.S."/>
            <person name="Walker M."/>
            <person name="Wu D."/>
            <person name="Yu G."/>
            <person name="Fraser C.M."/>
            <person name="Venter J.C."/>
            <person name="Davis R.W."/>
        </authorList>
    </citation>
    <scope>NUCLEOTIDE SEQUENCE [LARGE SCALE GENOMIC DNA]</scope>
    <source>
        <strain>cv. Columbia</strain>
    </source>
</reference>
<reference key="2">
    <citation type="journal article" date="2017" name="Plant J.">
        <title>Araport11: a complete reannotation of the Arabidopsis thaliana reference genome.</title>
        <authorList>
            <person name="Cheng C.Y."/>
            <person name="Krishnakumar V."/>
            <person name="Chan A.P."/>
            <person name="Thibaud-Nissen F."/>
            <person name="Schobel S."/>
            <person name="Town C.D."/>
        </authorList>
    </citation>
    <scope>GENOME REANNOTATION</scope>
    <source>
        <strain>cv. Columbia</strain>
    </source>
</reference>
<reference key="3">
    <citation type="submission" date="2004-03" db="EMBL/GenBank/DDBJ databases">
        <title>Arabidopsis ORF clones.</title>
        <authorList>
            <person name="Kim C.J."/>
            <person name="Chen H."/>
            <person name="Cheuk R.F."/>
            <person name="Shinn P."/>
            <person name="Carninci P."/>
            <person name="Hayashizaki Y."/>
            <person name="Ishida J."/>
            <person name="Kamiya A."/>
            <person name="Kawai J."/>
            <person name="Narusaka M."/>
            <person name="Sakurai T."/>
            <person name="Satou M."/>
            <person name="Seki M."/>
            <person name="Shinozaki K."/>
            <person name="Ecker J.R."/>
        </authorList>
    </citation>
    <scope>NUCLEOTIDE SEQUENCE [LARGE SCALE MRNA]</scope>
    <source>
        <strain>cv. Columbia</strain>
    </source>
</reference>
<reference key="4">
    <citation type="journal article" date="2002" name="Plant Mol. Biol.">
        <title>Probing the diversity of the Arabidopsis glutathione S-transferase gene family.</title>
        <authorList>
            <person name="Wagner U."/>
            <person name="Edwards R."/>
            <person name="Dixon D.P."/>
            <person name="Mauch F."/>
        </authorList>
    </citation>
    <scope>GENE FAMILY</scope>
    <scope>NOMENCLATURE</scope>
</reference>
<reference key="5">
    <citation type="journal article" date="2005" name="Plant Physiol.">
        <title>Gene expression and microscopic analysis of Arabidopsis exposed to chloroacetanilide herbicides and explosive compounds. A phytoremediation approach.</title>
        <authorList>
            <person name="Mezzari M.P."/>
            <person name="Walters K."/>
            <person name="Jelinkova M."/>
            <person name="Shih M.C."/>
            <person name="Just C.L."/>
            <person name="Schnoor J.L."/>
        </authorList>
    </citation>
    <scope>INDUCTION</scope>
</reference>
<reference key="6">
    <citation type="journal article" date="2007" name="Chemosphere">
        <title>Phytotoxicity and phytoremediation of 2,6-dinitrotoluene using a model plant, Arabidopsis thaliana.</title>
        <authorList>
            <person name="Yoon J.M."/>
            <person name="Oliver D.J."/>
            <person name="Shanks J.V."/>
        </authorList>
    </citation>
    <scope>INDUCTION</scope>
</reference>
<keyword id="KW-0963">Cytoplasm</keyword>
<keyword id="KW-0216">Detoxification</keyword>
<keyword id="KW-0597">Phosphoprotein</keyword>
<keyword id="KW-1185">Reference proteome</keyword>
<keyword id="KW-0346">Stress response</keyword>
<keyword id="KW-0808">Transferase</keyword>
<sequence>MADEVILLDFWASMFGMRTRIALAEKRVKYDHREEDLWNKSSLLLEMNPVHKKIPVLIHNGKPVCESLIQIEYIDETWPDNNPLLPSDPYKRAHAKFWADFIDKKVNVTARRIWAVKGEEQEAAKELIEILKTLESELGDKKYFGDETFGYVDIALIGFHSWFAVYEKFGNVSIESECSKLVAWAKRCLERESVAKALPESEKVITFISERRKKLGLE</sequence>
<dbReference type="EC" id="2.5.1.18"/>
<dbReference type="EMBL" id="AC007651">
    <property type="protein sequence ID" value="AAD50016.1"/>
    <property type="molecule type" value="Genomic_DNA"/>
</dbReference>
<dbReference type="EMBL" id="CP002684">
    <property type="protein sequence ID" value="AEE29554.1"/>
    <property type="molecule type" value="Genomic_DNA"/>
</dbReference>
<dbReference type="EMBL" id="BT012184">
    <property type="protein sequence ID" value="AAS76278.1"/>
    <property type="molecule type" value="mRNA"/>
</dbReference>
<dbReference type="PIR" id="G86307">
    <property type="entry name" value="G86307"/>
</dbReference>
<dbReference type="RefSeq" id="NP_173160.1">
    <property type="nucleotide sequence ID" value="NM_101578.3"/>
</dbReference>
<dbReference type="SMR" id="Q9SHH6"/>
<dbReference type="BioGRID" id="23528">
    <property type="interactions" value="1"/>
</dbReference>
<dbReference type="FunCoup" id="Q9SHH6">
    <property type="interactions" value="165"/>
</dbReference>
<dbReference type="STRING" id="3702.Q9SHH6"/>
<dbReference type="PaxDb" id="3702-AT1G17170.1"/>
<dbReference type="ProteomicsDB" id="247263"/>
<dbReference type="EnsemblPlants" id="AT1G17170.1">
    <property type="protein sequence ID" value="AT1G17170.1"/>
    <property type="gene ID" value="AT1G17170"/>
</dbReference>
<dbReference type="GeneID" id="838288"/>
<dbReference type="Gramene" id="AT1G17170.1">
    <property type="protein sequence ID" value="AT1G17170.1"/>
    <property type="gene ID" value="AT1G17170"/>
</dbReference>
<dbReference type="KEGG" id="ath:AT1G17170"/>
<dbReference type="Araport" id="AT1G17170"/>
<dbReference type="TAIR" id="AT1G17170">
    <property type="gene designation" value="GSTU24"/>
</dbReference>
<dbReference type="eggNOG" id="KOG0406">
    <property type="taxonomic scope" value="Eukaryota"/>
</dbReference>
<dbReference type="HOGENOM" id="CLU_011226_18_2_1"/>
<dbReference type="InParanoid" id="Q9SHH6"/>
<dbReference type="OMA" id="EYIDMVW"/>
<dbReference type="PhylomeDB" id="Q9SHH6"/>
<dbReference type="BioCyc" id="ARA:AT1G17170-MONOMER"/>
<dbReference type="BioCyc" id="MetaCyc:AT1G17170-MONOMER"/>
<dbReference type="BRENDA" id="2.5.1.18">
    <property type="organism ID" value="399"/>
</dbReference>
<dbReference type="PRO" id="PR:Q9SHH6"/>
<dbReference type="Proteomes" id="UP000006548">
    <property type="component" value="Chromosome 1"/>
</dbReference>
<dbReference type="ExpressionAtlas" id="Q9SHH6">
    <property type="expression patterns" value="baseline and differential"/>
</dbReference>
<dbReference type="GO" id="GO:0005737">
    <property type="term" value="C:cytoplasm"/>
    <property type="evidence" value="ECO:0000303"/>
    <property type="project" value="TAIR"/>
</dbReference>
<dbReference type="GO" id="GO:0005829">
    <property type="term" value="C:cytosol"/>
    <property type="evidence" value="ECO:0007005"/>
    <property type="project" value="TAIR"/>
</dbReference>
<dbReference type="GO" id="GO:0043295">
    <property type="term" value="F:glutathione binding"/>
    <property type="evidence" value="ECO:0000314"/>
    <property type="project" value="TAIR"/>
</dbReference>
<dbReference type="GO" id="GO:0004364">
    <property type="term" value="F:glutathione transferase activity"/>
    <property type="evidence" value="ECO:0000314"/>
    <property type="project" value="TAIR"/>
</dbReference>
<dbReference type="GO" id="GO:0046256">
    <property type="term" value="P:2,4,6-trinitrotoluene catabolic process"/>
    <property type="evidence" value="ECO:0000314"/>
    <property type="project" value="TAIR"/>
</dbReference>
<dbReference type="GO" id="GO:0006749">
    <property type="term" value="P:glutathione metabolic process"/>
    <property type="evidence" value="ECO:0007669"/>
    <property type="project" value="InterPro"/>
</dbReference>
<dbReference type="GO" id="GO:0009407">
    <property type="term" value="P:toxin catabolic process"/>
    <property type="evidence" value="ECO:0000304"/>
    <property type="project" value="TAIR"/>
</dbReference>
<dbReference type="CDD" id="cd03185">
    <property type="entry name" value="GST_C_Tau"/>
    <property type="match status" value="1"/>
</dbReference>
<dbReference type="CDD" id="cd03058">
    <property type="entry name" value="GST_N_Tau"/>
    <property type="match status" value="1"/>
</dbReference>
<dbReference type="FunFam" id="1.20.1050.10:FF:000018">
    <property type="entry name" value="Glutathione S-transferase U20"/>
    <property type="match status" value="1"/>
</dbReference>
<dbReference type="FunFam" id="3.40.30.10:FF:000014">
    <property type="entry name" value="Tau class glutathione S-transferase"/>
    <property type="match status" value="1"/>
</dbReference>
<dbReference type="Gene3D" id="1.20.1050.10">
    <property type="match status" value="1"/>
</dbReference>
<dbReference type="Gene3D" id="3.40.30.10">
    <property type="entry name" value="Glutaredoxin"/>
    <property type="match status" value="1"/>
</dbReference>
<dbReference type="InterPro" id="IPR010987">
    <property type="entry name" value="Glutathione-S-Trfase_C-like"/>
</dbReference>
<dbReference type="InterPro" id="IPR036282">
    <property type="entry name" value="Glutathione-S-Trfase_C_sf"/>
</dbReference>
<dbReference type="InterPro" id="IPR004045">
    <property type="entry name" value="Glutathione_S-Trfase_N"/>
</dbReference>
<dbReference type="InterPro" id="IPR004046">
    <property type="entry name" value="GST_C"/>
</dbReference>
<dbReference type="InterPro" id="IPR045074">
    <property type="entry name" value="GST_C_Tau"/>
</dbReference>
<dbReference type="InterPro" id="IPR045073">
    <property type="entry name" value="Omega/Tau-like"/>
</dbReference>
<dbReference type="InterPro" id="IPR036249">
    <property type="entry name" value="Thioredoxin-like_sf"/>
</dbReference>
<dbReference type="PANTHER" id="PTHR11260:SF549">
    <property type="entry name" value="GLUTATHIONE S-TRANSFERASE U24"/>
    <property type="match status" value="1"/>
</dbReference>
<dbReference type="PANTHER" id="PTHR11260">
    <property type="entry name" value="GLUTATHIONE S-TRANSFERASE, GST, SUPERFAMILY, GST DOMAIN CONTAINING"/>
    <property type="match status" value="1"/>
</dbReference>
<dbReference type="Pfam" id="PF00043">
    <property type="entry name" value="GST_C"/>
    <property type="match status" value="1"/>
</dbReference>
<dbReference type="Pfam" id="PF02798">
    <property type="entry name" value="GST_N"/>
    <property type="match status" value="1"/>
</dbReference>
<dbReference type="SFLD" id="SFLDG01152">
    <property type="entry name" value="Main.3:_Omega-_and_Tau-like"/>
    <property type="match status" value="1"/>
</dbReference>
<dbReference type="SFLD" id="SFLDG00358">
    <property type="entry name" value="Main_(cytGST)"/>
    <property type="match status" value="1"/>
</dbReference>
<dbReference type="SUPFAM" id="SSF47616">
    <property type="entry name" value="GST C-terminal domain-like"/>
    <property type="match status" value="1"/>
</dbReference>
<dbReference type="SUPFAM" id="SSF52833">
    <property type="entry name" value="Thioredoxin-like"/>
    <property type="match status" value="1"/>
</dbReference>
<dbReference type="PROSITE" id="PS50405">
    <property type="entry name" value="GST_CTER"/>
    <property type="match status" value="1"/>
</dbReference>
<dbReference type="PROSITE" id="PS50404">
    <property type="entry name" value="GST_NTER"/>
    <property type="match status" value="1"/>
</dbReference>
<evidence type="ECO:0000250" key="1"/>
<evidence type="ECO:0000250" key="2">
    <source>
        <dbReference type="UniProtKB" id="Q9ZW27"/>
    </source>
</evidence>
<evidence type="ECO:0000269" key="3">
    <source>
    </source>
</evidence>
<evidence type="ECO:0000269" key="4">
    <source>
    </source>
</evidence>
<evidence type="ECO:0000305" key="5"/>